<dbReference type="EMBL" id="AY665267">
    <property type="protein sequence ID" value="AAV74305.1"/>
    <property type="molecule type" value="mRNA"/>
</dbReference>
<dbReference type="RefSeq" id="NP_001012438.1">
    <property type="nucleotide sequence ID" value="NM_001012436.1"/>
</dbReference>
<dbReference type="SMR" id="Q5IS61"/>
<dbReference type="FunCoup" id="Q5IS61">
    <property type="interactions" value="234"/>
</dbReference>
<dbReference type="STRING" id="9598.ENSPTRP00000007679"/>
<dbReference type="GlyCosmos" id="Q5IS61">
    <property type="glycosylation" value="6 sites, No reported glycans"/>
</dbReference>
<dbReference type="PaxDb" id="9598-ENSPTRP00000007679"/>
<dbReference type="Ensembl" id="ENSPTRT00000008316.4">
    <property type="protein sequence ID" value="ENSPTRP00000007679.3"/>
    <property type="gene ID" value="ENSPTRG00000004489.5"/>
</dbReference>
<dbReference type="GeneID" id="466855"/>
<dbReference type="KEGG" id="ptr:466855"/>
<dbReference type="CTD" id="4978"/>
<dbReference type="eggNOG" id="KOG3510">
    <property type="taxonomic scope" value="Eukaryota"/>
</dbReference>
<dbReference type="GeneTree" id="ENSGT00940000160304"/>
<dbReference type="HOGENOM" id="CLU_027228_2_2_1"/>
<dbReference type="InParanoid" id="Q5IS61"/>
<dbReference type="OMA" id="RKYKVGW"/>
<dbReference type="OrthoDB" id="5951at9604"/>
<dbReference type="TreeFam" id="TF325565"/>
<dbReference type="Proteomes" id="UP000002277">
    <property type="component" value="Chromosome 11"/>
</dbReference>
<dbReference type="Bgee" id="ENSPTRG00000004489">
    <property type="expression patterns" value="Expressed in temporal lobe and 11 other cell types or tissues"/>
</dbReference>
<dbReference type="GO" id="GO:0005886">
    <property type="term" value="C:plasma membrane"/>
    <property type="evidence" value="ECO:0007669"/>
    <property type="project" value="UniProtKB-SubCell"/>
</dbReference>
<dbReference type="GO" id="GO:0098552">
    <property type="term" value="C:side of membrane"/>
    <property type="evidence" value="ECO:0007669"/>
    <property type="project" value="UniProtKB-KW"/>
</dbReference>
<dbReference type="GO" id="GO:0007155">
    <property type="term" value="P:cell adhesion"/>
    <property type="evidence" value="ECO:0007669"/>
    <property type="project" value="UniProtKB-KW"/>
</dbReference>
<dbReference type="FunFam" id="2.60.40.10:FF:000013">
    <property type="entry name" value="cell adhesion molecule 1 isoform X1"/>
    <property type="match status" value="1"/>
</dbReference>
<dbReference type="FunFam" id="2.60.40.10:FF:000305">
    <property type="entry name" value="neurotrimin isoform X2"/>
    <property type="match status" value="1"/>
</dbReference>
<dbReference type="FunFam" id="2.60.40.10:FF:000113">
    <property type="entry name" value="Opioid-binding protein/cell adhesion molecule"/>
    <property type="match status" value="1"/>
</dbReference>
<dbReference type="Gene3D" id="2.60.40.10">
    <property type="entry name" value="Immunoglobulins"/>
    <property type="match status" value="3"/>
</dbReference>
<dbReference type="InterPro" id="IPR007110">
    <property type="entry name" value="Ig-like_dom"/>
</dbReference>
<dbReference type="InterPro" id="IPR036179">
    <property type="entry name" value="Ig-like_dom_sf"/>
</dbReference>
<dbReference type="InterPro" id="IPR013783">
    <property type="entry name" value="Ig-like_fold"/>
</dbReference>
<dbReference type="InterPro" id="IPR013098">
    <property type="entry name" value="Ig_I-set"/>
</dbReference>
<dbReference type="InterPro" id="IPR003599">
    <property type="entry name" value="Ig_sub"/>
</dbReference>
<dbReference type="InterPro" id="IPR003598">
    <property type="entry name" value="Ig_sub2"/>
</dbReference>
<dbReference type="InterPro" id="IPR050876">
    <property type="entry name" value="IgLON_domain"/>
</dbReference>
<dbReference type="PANTHER" id="PTHR42757">
    <property type="entry name" value="IGLON FAMILY OF IMMUNOGLOBULIN SUPERFAMILY-RELATED"/>
    <property type="match status" value="1"/>
</dbReference>
<dbReference type="PANTHER" id="PTHR42757:SF17">
    <property type="entry name" value="OPIOID-BINDING PROTEIN_CELL ADHESION MOLECULE"/>
    <property type="match status" value="1"/>
</dbReference>
<dbReference type="Pfam" id="PF07679">
    <property type="entry name" value="I-set"/>
    <property type="match status" value="2"/>
</dbReference>
<dbReference type="Pfam" id="PF13927">
    <property type="entry name" value="Ig_3"/>
    <property type="match status" value="1"/>
</dbReference>
<dbReference type="SMART" id="SM00409">
    <property type="entry name" value="IG"/>
    <property type="match status" value="3"/>
</dbReference>
<dbReference type="SMART" id="SM00408">
    <property type="entry name" value="IGc2"/>
    <property type="match status" value="3"/>
</dbReference>
<dbReference type="SUPFAM" id="SSF48726">
    <property type="entry name" value="Immunoglobulin"/>
    <property type="match status" value="3"/>
</dbReference>
<dbReference type="PROSITE" id="PS50835">
    <property type="entry name" value="IG_LIKE"/>
    <property type="match status" value="3"/>
</dbReference>
<keyword id="KW-0130">Cell adhesion</keyword>
<keyword id="KW-1003">Cell membrane</keyword>
<keyword id="KW-1015">Disulfide bond</keyword>
<keyword id="KW-0325">Glycoprotein</keyword>
<keyword id="KW-0336">GPI-anchor</keyword>
<keyword id="KW-0393">Immunoglobulin domain</keyword>
<keyword id="KW-0449">Lipoprotein</keyword>
<keyword id="KW-0472">Membrane</keyword>
<keyword id="KW-1185">Reference proteome</keyword>
<keyword id="KW-0677">Repeat</keyword>
<keyword id="KW-0732">Signal</keyword>
<accession>Q5IS61</accession>
<gene>
    <name type="primary">OPCML</name>
    <name type="synonym">OBCAM</name>
</gene>
<comment type="function">
    <text evidence="1">Binds opioids in the presence of acidic lipids; probably involved in cell contact.</text>
</comment>
<comment type="subcellular location">
    <subcellularLocation>
        <location evidence="1">Cell membrane</location>
        <topology evidence="1">Lipid-anchor</topology>
        <topology evidence="1">GPI-anchor</topology>
    </subcellularLocation>
</comment>
<comment type="similarity">
    <text evidence="4">Belongs to the immunoglobulin superfamily. IgLON family.</text>
</comment>
<sequence length="345" mass="38008">MGVCGYLFLPWKCLVVVSLRLLFLVPTGVPVRSGDATFPKAMDNVTVRQGESATLRCTIDDRVTRVAWLNRSTILYAGNDKWSIDPRVIILVNTPTQYSIMIQNVDVYDEGPYTCSVQTDNHPKTSRVHLIVQVPPQIMNISSDITVNEGSSVTLLCLAIGRPEPTVTWRHLSVKEGQGFVSEDEYLEISDIKRDQSGEYECSALNDVAAPDVRKVKITVNYPPYISKAKNTGVSVGQKGILSCEASAVPMAEFQWFKEETRLATGLDGMRIENKGRMSTLTFFNVSEKDYGNYTCVATNKLGNTNASITLYGPGAVIDGVNSASRALACLWLSGTLLAHFFIKF</sequence>
<organism>
    <name type="scientific">Pan troglodytes</name>
    <name type="common">Chimpanzee</name>
    <dbReference type="NCBI Taxonomy" id="9598"/>
    <lineage>
        <taxon>Eukaryota</taxon>
        <taxon>Metazoa</taxon>
        <taxon>Chordata</taxon>
        <taxon>Craniata</taxon>
        <taxon>Vertebrata</taxon>
        <taxon>Euteleostomi</taxon>
        <taxon>Mammalia</taxon>
        <taxon>Eutheria</taxon>
        <taxon>Euarchontoglires</taxon>
        <taxon>Primates</taxon>
        <taxon>Haplorrhini</taxon>
        <taxon>Catarrhini</taxon>
        <taxon>Hominidae</taxon>
        <taxon>Pan</taxon>
    </lineage>
</organism>
<protein>
    <recommendedName>
        <fullName>Opioid-binding protein/cell adhesion molecule</fullName>
        <shortName>OBCAM</shortName>
        <shortName>OPCML</shortName>
        <shortName>Opioid-binding cell adhesion molecule</shortName>
    </recommendedName>
</protein>
<proteinExistence type="evidence at transcript level"/>
<name>OPCM_PANTR</name>
<feature type="signal peptide" evidence="1">
    <location>
        <begin position="1"/>
        <end position="27"/>
    </location>
</feature>
<feature type="chain" id="PRO_0000015120" description="Opioid-binding protein/cell adhesion molecule">
    <location>
        <begin position="28"/>
        <end position="322"/>
    </location>
</feature>
<feature type="propeptide" id="PRO_0000015121" description="Removed in mature form" evidence="2">
    <location>
        <begin position="323"/>
        <end position="345"/>
    </location>
</feature>
<feature type="domain" description="Ig-like C2-type 1">
    <location>
        <begin position="39"/>
        <end position="126"/>
    </location>
</feature>
<feature type="domain" description="Ig-like C2-type 2">
    <location>
        <begin position="136"/>
        <end position="219"/>
    </location>
</feature>
<feature type="domain" description="Ig-like C2-type 3">
    <location>
        <begin position="223"/>
        <end position="310"/>
    </location>
</feature>
<feature type="lipid moiety-binding region" description="GPI-anchor amidated asparagine" evidence="2">
    <location>
        <position position="322"/>
    </location>
</feature>
<feature type="glycosylation site" description="N-linked (GlcNAc...) asparagine" evidence="2">
    <location>
        <position position="44"/>
    </location>
</feature>
<feature type="glycosylation site" description="N-linked (GlcNAc...) asparagine" evidence="2">
    <location>
        <position position="70"/>
    </location>
</feature>
<feature type="glycosylation site" description="N-linked (GlcNAc...) asparagine" evidence="2">
    <location>
        <position position="140"/>
    </location>
</feature>
<feature type="glycosylation site" description="N-linked (GlcNAc...) asparagine" evidence="2">
    <location>
        <position position="285"/>
    </location>
</feature>
<feature type="glycosylation site" description="N-linked (GlcNAc...) asparagine" evidence="2">
    <location>
        <position position="293"/>
    </location>
</feature>
<feature type="glycosylation site" description="N-linked (GlcNAc...) asparagine" evidence="2">
    <location>
        <position position="306"/>
    </location>
</feature>
<feature type="disulfide bond" evidence="3">
    <location>
        <begin position="57"/>
        <end position="115"/>
    </location>
</feature>
<feature type="disulfide bond" evidence="3">
    <location>
        <begin position="157"/>
        <end position="202"/>
    </location>
</feature>
<feature type="disulfide bond" evidence="3">
    <location>
        <begin position="244"/>
        <end position="296"/>
    </location>
</feature>
<evidence type="ECO:0000250" key="1"/>
<evidence type="ECO:0000255" key="2"/>
<evidence type="ECO:0000255" key="3">
    <source>
        <dbReference type="PROSITE-ProRule" id="PRU00114"/>
    </source>
</evidence>
<evidence type="ECO:0000305" key="4"/>
<reference key="1">
    <citation type="journal article" date="2004" name="Cell">
        <title>Accelerated evolution of nervous system genes in the origin of Homo sapiens.</title>
        <authorList>
            <person name="Dorus S."/>
            <person name="Vallender E.J."/>
            <person name="Evans P.D."/>
            <person name="Anderson J.R."/>
            <person name="Gilbert S.L."/>
            <person name="Mahowald M."/>
            <person name="Wyckoff G.J."/>
            <person name="Malcom C.M."/>
            <person name="Lahn B.T."/>
        </authorList>
    </citation>
    <scope>NUCLEOTIDE SEQUENCE [MRNA]</scope>
</reference>